<keyword id="KW-0135">Cellulose biosynthesis</keyword>
<keyword id="KW-0378">Hydrolase</keyword>
<keyword id="KW-0547">Nucleotide-binding</keyword>
<keyword id="KW-0645">Protease</keyword>
<keyword id="KW-1185">Reference proteome</keyword>
<organism>
    <name type="scientific">Salmonella typhimurium (strain LT2 / SGSC1412 / ATCC 700720)</name>
    <dbReference type="NCBI Taxonomy" id="99287"/>
    <lineage>
        <taxon>Bacteria</taxon>
        <taxon>Pseudomonadati</taxon>
        <taxon>Pseudomonadota</taxon>
        <taxon>Gammaproteobacteria</taxon>
        <taxon>Enterobacterales</taxon>
        <taxon>Enterobacteriaceae</taxon>
        <taxon>Salmonella</taxon>
    </lineage>
</organism>
<comment type="function">
    <text evidence="1 2">Required for cellulose biosynthesis (PubMed:11929533). May have protease activity (PubMed:11929533), but BcsA is not targeted (PubMed:24942809). Binds bis-(3'-5') cyclic diguanylic acid (c-di-GMP) (PubMed:24942809).</text>
</comment>
<comment type="disruption phenotype">
    <text evidence="1">Mutants lack the ability to produce a biofilm.</text>
</comment>
<comment type="similarity">
    <text evidence="5">Belongs to the BcsE family.</text>
</comment>
<feature type="chain" id="PRO_0000417573" description="Cyclic di-GMP binding protein BcsE">
    <location>
        <begin position="1"/>
        <end position="523"/>
    </location>
</feature>
<dbReference type="EMBL" id="AJ315148">
    <property type="protein sequence ID" value="CAC86200.1"/>
    <property type="molecule type" value="Genomic_DNA"/>
</dbReference>
<dbReference type="EMBL" id="AE006468">
    <property type="protein sequence ID" value="AAL22482.1"/>
    <property type="molecule type" value="Genomic_DNA"/>
</dbReference>
<dbReference type="RefSeq" id="WP_001205760.1">
    <property type="nucleotide sequence ID" value="NC_003197.2"/>
</dbReference>
<dbReference type="SMR" id="Q8ZLB5"/>
<dbReference type="STRING" id="99287.STM3622"/>
<dbReference type="PaxDb" id="99287-STM3622"/>
<dbReference type="KEGG" id="stm:STM3622"/>
<dbReference type="PATRIC" id="fig|99287.12.peg.3829"/>
<dbReference type="HOGENOM" id="CLU_039389_2_0_6"/>
<dbReference type="BioCyc" id="SENT99287:STM3622-MONOMER"/>
<dbReference type="PHI-base" id="PHI:11602"/>
<dbReference type="Proteomes" id="UP000001014">
    <property type="component" value="Chromosome"/>
</dbReference>
<dbReference type="GO" id="GO:0035438">
    <property type="term" value="F:cyclic-di-GMP binding"/>
    <property type="evidence" value="ECO:0007669"/>
    <property type="project" value="InterPro"/>
</dbReference>
<dbReference type="GO" id="GO:0008233">
    <property type="term" value="F:peptidase activity"/>
    <property type="evidence" value="ECO:0007669"/>
    <property type="project" value="UniProtKB-KW"/>
</dbReference>
<dbReference type="GO" id="GO:0030244">
    <property type="term" value="P:cellulose biosynthetic process"/>
    <property type="evidence" value="ECO:0007669"/>
    <property type="project" value="UniProtKB-KW"/>
</dbReference>
<dbReference type="GO" id="GO:0006508">
    <property type="term" value="P:proteolysis"/>
    <property type="evidence" value="ECO:0007669"/>
    <property type="project" value="UniProtKB-KW"/>
</dbReference>
<dbReference type="InterPro" id="IPR017745">
    <property type="entry name" value="BcsE"/>
</dbReference>
<dbReference type="NCBIfam" id="TIGR03369">
    <property type="entry name" value="cellulose_bcsE"/>
    <property type="match status" value="1"/>
</dbReference>
<dbReference type="NCBIfam" id="NF011619">
    <property type="entry name" value="PRK15045.1"/>
    <property type="match status" value="1"/>
</dbReference>
<dbReference type="Pfam" id="PF10995">
    <property type="entry name" value="CBP_BcsE"/>
    <property type="match status" value="1"/>
</dbReference>
<protein>
    <recommendedName>
        <fullName evidence="4">Cyclic di-GMP binding protein BcsE</fullName>
    </recommendedName>
    <alternativeName>
        <fullName>Cellulose biosynthesis protein BcsE</fullName>
    </alternativeName>
</protein>
<gene>
    <name evidence="3" type="primary">bcsE</name>
    <name type="ordered locus">STM3622</name>
</gene>
<proteinExistence type="evidence at protein level"/>
<evidence type="ECO:0000269" key="1">
    <source>
    </source>
</evidence>
<evidence type="ECO:0000269" key="2">
    <source>
    </source>
</evidence>
<evidence type="ECO:0000303" key="3">
    <source>
    </source>
</evidence>
<evidence type="ECO:0000303" key="4">
    <source>
    </source>
</evidence>
<evidence type="ECO:0000305" key="5"/>
<accession>Q8ZLB5</accession>
<accession>Q7AY58</accession>
<name>BCSE_SALTY</name>
<reference key="1">
    <citation type="journal article" date="2002" name="Mol. Microbiol.">
        <title>Genetic analysis of Salmonella enteritidis biofilm formation: critical role of cellulose.</title>
        <authorList>
            <person name="Solano C."/>
            <person name="Garcia B."/>
            <person name="Valle J."/>
            <person name="Berasain C."/>
            <person name="Ghigo J.-M."/>
            <person name="Gamazo C."/>
            <person name="Lasa I."/>
        </authorList>
    </citation>
    <scope>NUCLEOTIDE SEQUENCE [GENOMIC DNA]</scope>
    <scope>FUNCTION</scope>
    <scope>DISRUPTION PHENOTYPE</scope>
    <scope>GENE NAME</scope>
    <source>
        <strain>LT2</strain>
    </source>
</reference>
<reference key="2">
    <citation type="journal article" date="2001" name="Nature">
        <title>Complete genome sequence of Salmonella enterica serovar Typhimurium LT2.</title>
        <authorList>
            <person name="McClelland M."/>
            <person name="Sanderson K.E."/>
            <person name="Spieth J."/>
            <person name="Clifton S.W."/>
            <person name="Latreille P."/>
            <person name="Courtney L."/>
            <person name="Porwollik S."/>
            <person name="Ali J."/>
            <person name="Dante M."/>
            <person name="Du F."/>
            <person name="Hou S."/>
            <person name="Layman D."/>
            <person name="Leonard S."/>
            <person name="Nguyen C."/>
            <person name="Scott K."/>
            <person name="Holmes A."/>
            <person name="Grewal N."/>
            <person name="Mulvaney E."/>
            <person name="Ryan E."/>
            <person name="Sun H."/>
            <person name="Florea L."/>
            <person name="Miller W."/>
            <person name="Stoneking T."/>
            <person name="Nhan M."/>
            <person name="Waterston R."/>
            <person name="Wilson R.K."/>
        </authorList>
    </citation>
    <scope>NUCLEOTIDE SEQUENCE [LARGE SCALE GENOMIC DNA]</scope>
    <source>
        <strain>LT2 / SGSC1412 / ATCC 700720</strain>
    </source>
</reference>
<reference key="3">
    <citation type="journal article" date="2014" name="Mol. Microbiol.">
        <title>GIL, a new c-di-GMP-binding protein domain involved in regulation of cellulose synthesis in enterobacteria.</title>
        <authorList>
            <person name="Fang X."/>
            <person name="Ahmad I."/>
            <person name="Blanka A."/>
            <person name="Schottkowski M."/>
            <person name="Cimdins A."/>
            <person name="Galperin M.Y."/>
            <person name="Roemling U."/>
            <person name="Gomelsky M."/>
        </authorList>
    </citation>
    <scope>FUNCTION</scope>
    <scope>C-DI-GMP-BINDING</scope>
    <source>
        <strain>K12 / MG1655 / ATCC 47076</strain>
    </source>
</reference>
<sequence>MRDTVDPVFSLGISSLWDELRHMPTGGVWWVNADRQQDAISLVNQTIASQTENANVAVIGMEGDPGKVIKLDESHGPEKIRLFTMPASEKGLYSLPHDLLCSVNPTHYFFILICANNTWRNITSESLHKWLEKMNKWTRFHHCSLLVINPCNNSDKQSSLLMGEYRSLFGLASLRFQGDQHLFDIAFWCNEKGVSARQQLLLCQQDERWTLSHQEETAIQPRSDEKRILSHVAVLEGAPPLSEHWTLFDNNEALFNDARTAQAATIIFSLTQNNQIEPLARRIHTLRRQRGSALKIVVRENIASLRATDERLLLGCGANMIIPWNAPLSRCLTLIESVQGQQFSRYVPEDITTLLSMTQPLKLRGFQPWDTFCDAIHTMMSNTLLPADGKGVLVALRPVPGIRVEQALTLCRPNRTGDIMTIGGNRLVLFLSFCRVNDLDTALNHIFPLPTGDIFSNRMVWFEDKQISAELVQMRLLSPELWGTPLPLAKRADPVINAEHDGRIWRRIPEPLRLLDDTAERAS</sequence>